<name>PYRB_STAA8</name>
<evidence type="ECO:0000255" key="1">
    <source>
        <dbReference type="HAMAP-Rule" id="MF_00001"/>
    </source>
</evidence>
<protein>
    <recommendedName>
        <fullName evidence="1">Aspartate carbamoyltransferase catalytic subunit</fullName>
        <ecNumber evidence="1">2.1.3.2</ecNumber>
    </recommendedName>
    <alternativeName>
        <fullName evidence="1">Aspartate transcarbamylase</fullName>
        <shortName evidence="1">ATCase</shortName>
    </alternativeName>
</protein>
<reference key="1">
    <citation type="book" date="2006" name="Gram positive pathogens, 2nd edition">
        <title>The Staphylococcus aureus NCTC 8325 genome.</title>
        <editorList>
            <person name="Fischetti V."/>
            <person name="Novick R."/>
            <person name="Ferretti J."/>
            <person name="Portnoy D."/>
            <person name="Rood J."/>
        </editorList>
        <authorList>
            <person name="Gillaspy A.F."/>
            <person name="Worrell V."/>
            <person name="Orvis J."/>
            <person name="Roe B.A."/>
            <person name="Dyer D.W."/>
            <person name="Iandolo J.J."/>
        </authorList>
    </citation>
    <scope>NUCLEOTIDE SEQUENCE [LARGE SCALE GENOMIC DNA]</scope>
    <source>
        <strain>NCTC 8325 / PS 47</strain>
    </source>
</reference>
<feature type="chain" id="PRO_0000301623" description="Aspartate carbamoyltransferase catalytic subunit">
    <location>
        <begin position="1"/>
        <end position="293"/>
    </location>
</feature>
<feature type="binding site" evidence="1">
    <location>
        <position position="50"/>
    </location>
    <ligand>
        <name>carbamoyl phosphate</name>
        <dbReference type="ChEBI" id="CHEBI:58228"/>
    </ligand>
</feature>
<feature type="binding site" evidence="1">
    <location>
        <position position="51"/>
    </location>
    <ligand>
        <name>carbamoyl phosphate</name>
        <dbReference type="ChEBI" id="CHEBI:58228"/>
    </ligand>
</feature>
<feature type="binding site" evidence="1">
    <location>
        <position position="78"/>
    </location>
    <ligand>
        <name>L-aspartate</name>
        <dbReference type="ChEBI" id="CHEBI:29991"/>
    </ligand>
</feature>
<feature type="binding site" evidence="1">
    <location>
        <position position="100"/>
    </location>
    <ligand>
        <name>carbamoyl phosphate</name>
        <dbReference type="ChEBI" id="CHEBI:58228"/>
    </ligand>
</feature>
<feature type="binding site" evidence="1">
    <location>
        <position position="127"/>
    </location>
    <ligand>
        <name>carbamoyl phosphate</name>
        <dbReference type="ChEBI" id="CHEBI:58228"/>
    </ligand>
</feature>
<feature type="binding site" evidence="1">
    <location>
        <position position="130"/>
    </location>
    <ligand>
        <name>carbamoyl phosphate</name>
        <dbReference type="ChEBI" id="CHEBI:58228"/>
    </ligand>
</feature>
<feature type="binding site" evidence="1">
    <location>
        <position position="160"/>
    </location>
    <ligand>
        <name>L-aspartate</name>
        <dbReference type="ChEBI" id="CHEBI:29991"/>
    </ligand>
</feature>
<feature type="binding site" evidence="1">
    <location>
        <position position="210"/>
    </location>
    <ligand>
        <name>L-aspartate</name>
        <dbReference type="ChEBI" id="CHEBI:29991"/>
    </ligand>
</feature>
<feature type="binding site" evidence="1">
    <location>
        <position position="253"/>
    </location>
    <ligand>
        <name>carbamoyl phosphate</name>
        <dbReference type="ChEBI" id="CHEBI:58228"/>
    </ligand>
</feature>
<feature type="binding site" evidence="1">
    <location>
        <position position="254"/>
    </location>
    <ligand>
        <name>carbamoyl phosphate</name>
        <dbReference type="ChEBI" id="CHEBI:58228"/>
    </ligand>
</feature>
<accession>Q2FZ75</accession>
<proteinExistence type="evidence at protein level"/>
<keyword id="KW-0002">3D-structure</keyword>
<keyword id="KW-0665">Pyrimidine biosynthesis</keyword>
<keyword id="KW-1185">Reference proteome</keyword>
<keyword id="KW-0808">Transferase</keyword>
<dbReference type="EC" id="2.1.3.2" evidence="1"/>
<dbReference type="EMBL" id="CP000253">
    <property type="protein sequence ID" value="ABD30274.1"/>
    <property type="molecule type" value="Genomic_DNA"/>
</dbReference>
<dbReference type="RefSeq" id="WP_001016166.1">
    <property type="nucleotide sequence ID" value="NZ_LS483365.1"/>
</dbReference>
<dbReference type="RefSeq" id="YP_499706.1">
    <property type="nucleotide sequence ID" value="NC_007795.1"/>
</dbReference>
<dbReference type="PDB" id="6PNZ">
    <property type="method" value="X-ray"/>
    <property type="resolution" value="2.27 A"/>
    <property type="chains" value="A/B/C=1-293"/>
</dbReference>
<dbReference type="PDBsum" id="6PNZ"/>
<dbReference type="SMR" id="Q2FZ75"/>
<dbReference type="STRING" id="93061.SAOUHSC_01166"/>
<dbReference type="PaxDb" id="1280-SAXN108_1198"/>
<dbReference type="GeneID" id="3920918"/>
<dbReference type="KEGG" id="sao:SAOUHSC_01166"/>
<dbReference type="PATRIC" id="fig|93061.5.peg.1069"/>
<dbReference type="eggNOG" id="COG0540">
    <property type="taxonomic scope" value="Bacteria"/>
</dbReference>
<dbReference type="HOGENOM" id="CLU_043846_2_1_9"/>
<dbReference type="OrthoDB" id="9774690at2"/>
<dbReference type="UniPathway" id="UPA00070">
    <property type="reaction ID" value="UER00116"/>
</dbReference>
<dbReference type="PRO" id="PR:Q2FZ75"/>
<dbReference type="Proteomes" id="UP000008816">
    <property type="component" value="Chromosome"/>
</dbReference>
<dbReference type="GO" id="GO:0016597">
    <property type="term" value="F:amino acid binding"/>
    <property type="evidence" value="ECO:0007669"/>
    <property type="project" value="InterPro"/>
</dbReference>
<dbReference type="GO" id="GO:0004070">
    <property type="term" value="F:aspartate carbamoyltransferase activity"/>
    <property type="evidence" value="ECO:0007669"/>
    <property type="project" value="UniProtKB-UniRule"/>
</dbReference>
<dbReference type="GO" id="GO:0006207">
    <property type="term" value="P:'de novo' pyrimidine nucleobase biosynthetic process"/>
    <property type="evidence" value="ECO:0007669"/>
    <property type="project" value="InterPro"/>
</dbReference>
<dbReference type="GO" id="GO:0044205">
    <property type="term" value="P:'de novo' UMP biosynthetic process"/>
    <property type="evidence" value="ECO:0007669"/>
    <property type="project" value="UniProtKB-UniRule"/>
</dbReference>
<dbReference type="GO" id="GO:0006520">
    <property type="term" value="P:amino acid metabolic process"/>
    <property type="evidence" value="ECO:0007669"/>
    <property type="project" value="InterPro"/>
</dbReference>
<dbReference type="FunFam" id="3.40.50.1370:FF:000011">
    <property type="entry name" value="Aspartate carbamoyltransferase"/>
    <property type="match status" value="1"/>
</dbReference>
<dbReference type="Gene3D" id="3.40.50.1370">
    <property type="entry name" value="Aspartate/ornithine carbamoyltransferase"/>
    <property type="match status" value="2"/>
</dbReference>
<dbReference type="HAMAP" id="MF_00001">
    <property type="entry name" value="Asp_carb_tr"/>
    <property type="match status" value="1"/>
</dbReference>
<dbReference type="InterPro" id="IPR006132">
    <property type="entry name" value="Asp/Orn_carbamoyltranf_P-bd"/>
</dbReference>
<dbReference type="InterPro" id="IPR006130">
    <property type="entry name" value="Asp/Orn_carbamoylTrfase"/>
</dbReference>
<dbReference type="InterPro" id="IPR036901">
    <property type="entry name" value="Asp/Orn_carbamoylTrfase_sf"/>
</dbReference>
<dbReference type="InterPro" id="IPR002082">
    <property type="entry name" value="Asp_carbamoyltransf"/>
</dbReference>
<dbReference type="InterPro" id="IPR006131">
    <property type="entry name" value="Asp_carbamoyltransf_Asp/Orn-bd"/>
</dbReference>
<dbReference type="NCBIfam" id="TIGR00670">
    <property type="entry name" value="asp_carb_tr"/>
    <property type="match status" value="1"/>
</dbReference>
<dbReference type="NCBIfam" id="NF002032">
    <property type="entry name" value="PRK00856.1"/>
    <property type="match status" value="1"/>
</dbReference>
<dbReference type="PANTHER" id="PTHR45753:SF6">
    <property type="entry name" value="ASPARTATE CARBAMOYLTRANSFERASE"/>
    <property type="match status" value="1"/>
</dbReference>
<dbReference type="PANTHER" id="PTHR45753">
    <property type="entry name" value="ORNITHINE CARBAMOYLTRANSFERASE, MITOCHONDRIAL"/>
    <property type="match status" value="1"/>
</dbReference>
<dbReference type="Pfam" id="PF00185">
    <property type="entry name" value="OTCace"/>
    <property type="match status" value="1"/>
</dbReference>
<dbReference type="Pfam" id="PF02729">
    <property type="entry name" value="OTCace_N"/>
    <property type="match status" value="1"/>
</dbReference>
<dbReference type="PRINTS" id="PR00100">
    <property type="entry name" value="AOTCASE"/>
</dbReference>
<dbReference type="PRINTS" id="PR00101">
    <property type="entry name" value="ATCASE"/>
</dbReference>
<dbReference type="SUPFAM" id="SSF53671">
    <property type="entry name" value="Aspartate/ornithine carbamoyltransferase"/>
    <property type="match status" value="1"/>
</dbReference>
<dbReference type="PROSITE" id="PS00097">
    <property type="entry name" value="CARBAMOYLTRANSFERASE"/>
    <property type="match status" value="1"/>
</dbReference>
<organism>
    <name type="scientific">Staphylococcus aureus (strain NCTC 8325 / PS 47)</name>
    <dbReference type="NCBI Taxonomy" id="93061"/>
    <lineage>
        <taxon>Bacteria</taxon>
        <taxon>Bacillati</taxon>
        <taxon>Bacillota</taxon>
        <taxon>Bacilli</taxon>
        <taxon>Bacillales</taxon>
        <taxon>Staphylococcaceae</taxon>
        <taxon>Staphylococcus</taxon>
    </lineage>
</organism>
<sequence length="293" mass="33258">MNHLLSMEHLSTDQIYKLIQKASQFKSGERQLPNFEGKYVANLFFENSTRTKCSFEMAELKLGLKTISFETSTSSVSKGESLYDTCKTLESIGCDLLVIRHPFNNYYEKLANINIPIANAGDGSGQHPTQSLLDLMTIYEEYGYFEGLNVLICGDIKNSRVARSNYHSLKALGANVMFNSPNAWIDDSLEAPYVNIDDVIETVDIVMLLRIQHERHGLAEETRFAADDYHQKHGLNEVRYNKLQEHAIVMHPAPVNRGVEIQSDLVEASKSRIFKQMENGVYLRMAVIDELLK</sequence>
<gene>
    <name evidence="1" type="primary">pyrB</name>
    <name type="ordered locus">SAOUHSC_01166</name>
</gene>
<comment type="function">
    <text evidence="1">Catalyzes the condensation of carbamoyl phosphate and aspartate to form carbamoyl aspartate and inorganic phosphate, the committed step in the de novo pyrimidine nucleotide biosynthesis pathway.</text>
</comment>
<comment type="catalytic activity">
    <reaction evidence="1">
        <text>carbamoyl phosphate + L-aspartate = N-carbamoyl-L-aspartate + phosphate + H(+)</text>
        <dbReference type="Rhea" id="RHEA:20013"/>
        <dbReference type="ChEBI" id="CHEBI:15378"/>
        <dbReference type="ChEBI" id="CHEBI:29991"/>
        <dbReference type="ChEBI" id="CHEBI:32814"/>
        <dbReference type="ChEBI" id="CHEBI:43474"/>
        <dbReference type="ChEBI" id="CHEBI:58228"/>
        <dbReference type="EC" id="2.1.3.2"/>
    </reaction>
</comment>
<comment type="pathway">
    <text evidence="1">Pyrimidine metabolism; UMP biosynthesis via de novo pathway; (S)-dihydroorotate from bicarbonate: step 2/3.</text>
</comment>
<comment type="subunit">
    <text evidence="1">Heterododecamer (2C3:3R2) of six catalytic PyrB chains organized as two trimers (C3), and six regulatory PyrI chains organized as three dimers (R2).</text>
</comment>
<comment type="similarity">
    <text evidence="1">Belongs to the aspartate/ornithine carbamoyltransferase superfamily. ATCase family.</text>
</comment>